<evidence type="ECO:0000255" key="1">
    <source>
        <dbReference type="HAMAP-Rule" id="MF_01869"/>
    </source>
</evidence>
<reference key="1">
    <citation type="journal article" date="2006" name="J. Bacteriol.">
        <title>Complete genome sequence of Yersinia pestis strains Antiqua and Nepal516: evidence of gene reduction in an emerging pathogen.</title>
        <authorList>
            <person name="Chain P.S.G."/>
            <person name="Hu P."/>
            <person name="Malfatti S.A."/>
            <person name="Radnedge L."/>
            <person name="Larimer F."/>
            <person name="Vergez L.M."/>
            <person name="Worsham P."/>
            <person name="Chu M.C."/>
            <person name="Andersen G.L."/>
        </authorList>
    </citation>
    <scope>NUCLEOTIDE SEQUENCE [LARGE SCALE GENOMIC DNA]</scope>
    <source>
        <strain>Antiqua</strain>
    </source>
</reference>
<feature type="chain" id="PRO_0000383015" description="Probable 4-amino-4-deoxy-L-arabinose-phosphoundecaprenol flippase subunit ArnE">
    <location>
        <begin position="1"/>
        <end position="114"/>
    </location>
</feature>
<feature type="transmembrane region" description="Helical" evidence="1">
    <location>
        <begin position="38"/>
        <end position="58"/>
    </location>
</feature>
<feature type="transmembrane region" description="Helical" evidence="1">
    <location>
        <begin position="64"/>
        <end position="84"/>
    </location>
</feature>
<feature type="transmembrane region" description="Helical" evidence="1">
    <location>
        <begin position="94"/>
        <end position="114"/>
    </location>
</feature>
<feature type="domain" description="EamA" evidence="1">
    <location>
        <begin position="43"/>
        <end position="112"/>
    </location>
</feature>
<accession>Q1C745</accession>
<gene>
    <name evidence="1" type="primary">arnE</name>
    <name type="ordered locus">YPA_1761</name>
</gene>
<protein>
    <recommendedName>
        <fullName evidence="1">Probable 4-amino-4-deoxy-L-arabinose-phosphoundecaprenol flippase subunit ArnE</fullName>
        <shortName evidence="1">L-Ara4N-phosphoundecaprenol flippase subunit ArnE</shortName>
    </recommendedName>
    <alternativeName>
        <fullName evidence="1">Undecaprenyl phosphate-aminoarabinose flippase subunit ArnE</fullName>
    </alternativeName>
</protein>
<comment type="function">
    <text evidence="1">Translocates 4-amino-4-deoxy-L-arabinose-phosphoundecaprenol (alpha-L-Ara4N-phosphoundecaprenol) from the cytoplasmic to the periplasmic side of the inner membrane.</text>
</comment>
<comment type="pathway">
    <text evidence="1">Bacterial outer membrane biogenesis; lipopolysaccharide biosynthesis.</text>
</comment>
<comment type="subunit">
    <text evidence="1">Heterodimer of ArnE and ArnF.</text>
</comment>
<comment type="subcellular location">
    <subcellularLocation>
        <location evidence="1">Cell inner membrane</location>
        <topology evidence="1">Multi-pass membrane protein</topology>
    </subcellularLocation>
</comment>
<comment type="similarity">
    <text evidence="1">Belongs to the ArnE family.</text>
</comment>
<organism>
    <name type="scientific">Yersinia pestis bv. Antiqua (strain Antiqua)</name>
    <dbReference type="NCBI Taxonomy" id="360102"/>
    <lineage>
        <taxon>Bacteria</taxon>
        <taxon>Pseudomonadati</taxon>
        <taxon>Pseudomonadota</taxon>
        <taxon>Gammaproteobacteria</taxon>
        <taxon>Enterobacterales</taxon>
        <taxon>Yersiniaceae</taxon>
        <taxon>Yersinia</taxon>
    </lineage>
</organism>
<name>ARNE_YERPA</name>
<sequence>MNSYLLLLMVSLLTCIGQLCQKQAAQCWEQPQARRLNLTLRWLAIAVVSLGLGMLLWLRLLQQLPLSVAYPMLSFNFVLVTLAAQLFYGEKATLRHWLGVAAIMFGILLMSWHL</sequence>
<dbReference type="EMBL" id="CP000308">
    <property type="protein sequence ID" value="ABG13727.1"/>
    <property type="molecule type" value="Genomic_DNA"/>
</dbReference>
<dbReference type="RefSeq" id="WP_002211820.1">
    <property type="nucleotide sequence ID" value="NZ_CP009906.1"/>
</dbReference>
<dbReference type="SMR" id="Q1C745"/>
<dbReference type="GeneID" id="57976260"/>
<dbReference type="KEGG" id="ypa:YPA_1761"/>
<dbReference type="UniPathway" id="UPA00030"/>
<dbReference type="Proteomes" id="UP000001971">
    <property type="component" value="Chromosome"/>
</dbReference>
<dbReference type="GO" id="GO:0005886">
    <property type="term" value="C:plasma membrane"/>
    <property type="evidence" value="ECO:0007669"/>
    <property type="project" value="UniProtKB-SubCell"/>
</dbReference>
<dbReference type="GO" id="GO:1901505">
    <property type="term" value="F:carbohydrate derivative transmembrane transporter activity"/>
    <property type="evidence" value="ECO:0007669"/>
    <property type="project" value="InterPro"/>
</dbReference>
<dbReference type="GO" id="GO:0009245">
    <property type="term" value="P:lipid A biosynthetic process"/>
    <property type="evidence" value="ECO:0007669"/>
    <property type="project" value="UniProtKB-UniRule"/>
</dbReference>
<dbReference type="GO" id="GO:0009103">
    <property type="term" value="P:lipopolysaccharide biosynthetic process"/>
    <property type="evidence" value="ECO:0007669"/>
    <property type="project" value="UniProtKB-UniRule"/>
</dbReference>
<dbReference type="FunFam" id="1.10.3730.20:FF:000002">
    <property type="entry name" value="Probable 4-amino-4-deoxy-L-arabinose-phosphoundecaprenol flippase subunit ArnE"/>
    <property type="match status" value="1"/>
</dbReference>
<dbReference type="Gene3D" id="1.10.3730.20">
    <property type="match status" value="1"/>
</dbReference>
<dbReference type="HAMAP" id="MF_01869">
    <property type="entry name" value="Flippase_ArnE"/>
    <property type="match status" value="1"/>
</dbReference>
<dbReference type="InterPro" id="IPR000620">
    <property type="entry name" value="EamA_dom"/>
</dbReference>
<dbReference type="InterPro" id="IPR022883">
    <property type="entry name" value="Flippase_ArnE"/>
</dbReference>
<dbReference type="InterPro" id="IPR000390">
    <property type="entry name" value="Small_drug/metabolite_transptr"/>
</dbReference>
<dbReference type="NCBIfam" id="NF011625">
    <property type="entry name" value="PRK15051.1"/>
    <property type="match status" value="1"/>
</dbReference>
<dbReference type="PANTHER" id="PTHR30561:SF23">
    <property type="entry name" value="4-AMINO-4-DEOXY-L-ARABINOSE-PHOSPHOUNDECAPRENOL FLIPPASE SUBUNIT ARNE-RELATED"/>
    <property type="match status" value="1"/>
</dbReference>
<dbReference type="PANTHER" id="PTHR30561">
    <property type="entry name" value="SMR FAMILY PROTON-DEPENDENT DRUG EFFLUX TRANSPORTER SUGE"/>
    <property type="match status" value="1"/>
</dbReference>
<dbReference type="Pfam" id="PF00892">
    <property type="entry name" value="EamA"/>
    <property type="match status" value="1"/>
</dbReference>
<dbReference type="SUPFAM" id="SSF103481">
    <property type="entry name" value="Multidrug resistance efflux transporter EmrE"/>
    <property type="match status" value="1"/>
</dbReference>
<keyword id="KW-0997">Cell inner membrane</keyword>
<keyword id="KW-1003">Cell membrane</keyword>
<keyword id="KW-0441">Lipid A biosynthesis</keyword>
<keyword id="KW-0444">Lipid biosynthesis</keyword>
<keyword id="KW-0443">Lipid metabolism</keyword>
<keyword id="KW-0448">Lipopolysaccharide biosynthesis</keyword>
<keyword id="KW-0472">Membrane</keyword>
<keyword id="KW-0812">Transmembrane</keyword>
<keyword id="KW-1133">Transmembrane helix</keyword>
<keyword id="KW-0813">Transport</keyword>
<proteinExistence type="inferred from homology"/>